<evidence type="ECO:0000255" key="1">
    <source>
        <dbReference type="HAMAP-Rule" id="MF_00235"/>
    </source>
</evidence>
<evidence type="ECO:0000269" key="2">
    <source>
    </source>
</evidence>
<evidence type="ECO:0000269" key="3">
    <source>
    </source>
</evidence>
<evidence type="ECO:0000269" key="4">
    <source>
    </source>
</evidence>
<evidence type="ECO:0000269" key="5">
    <source>
    </source>
</evidence>
<evidence type="ECO:0000305" key="6">
    <source>
    </source>
</evidence>
<evidence type="ECO:0007829" key="7">
    <source>
        <dbReference type="PDB" id="1P4S"/>
    </source>
</evidence>
<evidence type="ECO:0007829" key="8">
    <source>
        <dbReference type="PDB" id="2CDN"/>
    </source>
</evidence>
<accession>P9WKF5</accession>
<accession>L0T7C0</accession>
<accession>O53796</accession>
<accession>P69440</accession>
<accession>P94927</accession>
<dbReference type="EC" id="2.7.4.3" evidence="1"/>
<dbReference type="EMBL" id="AL123456">
    <property type="protein sequence ID" value="CCP43478.1"/>
    <property type="molecule type" value="Genomic_DNA"/>
</dbReference>
<dbReference type="PIR" id="H70822">
    <property type="entry name" value="H70822"/>
</dbReference>
<dbReference type="RefSeq" id="NP_215247.1">
    <property type="nucleotide sequence ID" value="NC_000962.3"/>
</dbReference>
<dbReference type="RefSeq" id="WP_003403726.1">
    <property type="nucleotide sequence ID" value="NZ_NVQJ01000007.1"/>
</dbReference>
<dbReference type="PDB" id="1P4S">
    <property type="method" value="NMR"/>
    <property type="chains" value="A=1-181"/>
</dbReference>
<dbReference type="PDB" id="2CDN">
    <property type="method" value="X-ray"/>
    <property type="resolution" value="1.90 A"/>
    <property type="chains" value="A=1-181"/>
</dbReference>
<dbReference type="PDBsum" id="1P4S"/>
<dbReference type="PDBsum" id="2CDN"/>
<dbReference type="SMR" id="P9WKF5"/>
<dbReference type="FunCoup" id="P9WKF5">
    <property type="interactions" value="541"/>
</dbReference>
<dbReference type="STRING" id="83332.Rv0733"/>
<dbReference type="PaxDb" id="83332-Rv0733"/>
<dbReference type="DNASU" id="888567"/>
<dbReference type="GeneID" id="888567"/>
<dbReference type="KEGG" id="mtu:Rv0733"/>
<dbReference type="KEGG" id="mtv:RVBD_0733"/>
<dbReference type="TubercuList" id="Rv0733"/>
<dbReference type="eggNOG" id="COG0563">
    <property type="taxonomic scope" value="Bacteria"/>
</dbReference>
<dbReference type="InParanoid" id="P9WKF5"/>
<dbReference type="OrthoDB" id="9805030at2"/>
<dbReference type="PhylomeDB" id="P9WKF5"/>
<dbReference type="BRENDA" id="2.7.4.3">
    <property type="organism ID" value="3445"/>
</dbReference>
<dbReference type="UniPathway" id="UPA00588">
    <property type="reaction ID" value="UER00649"/>
</dbReference>
<dbReference type="EvolutionaryTrace" id="P9WKF5"/>
<dbReference type="Proteomes" id="UP000001584">
    <property type="component" value="Chromosome"/>
</dbReference>
<dbReference type="GO" id="GO:0005737">
    <property type="term" value="C:cytoplasm"/>
    <property type="evidence" value="ECO:0000318"/>
    <property type="project" value="GO_Central"/>
</dbReference>
<dbReference type="GO" id="GO:0005829">
    <property type="term" value="C:cytosol"/>
    <property type="evidence" value="ECO:0000314"/>
    <property type="project" value="MTBBASE"/>
</dbReference>
<dbReference type="GO" id="GO:0009274">
    <property type="term" value="C:peptidoglycan-based cell wall"/>
    <property type="evidence" value="ECO:0007005"/>
    <property type="project" value="MTBBASE"/>
</dbReference>
<dbReference type="GO" id="GO:0005886">
    <property type="term" value="C:plasma membrane"/>
    <property type="evidence" value="ECO:0007005"/>
    <property type="project" value="MTBBASE"/>
</dbReference>
<dbReference type="GO" id="GO:0004017">
    <property type="term" value="F:adenylate kinase activity"/>
    <property type="evidence" value="ECO:0000314"/>
    <property type="project" value="MTBBASE"/>
</dbReference>
<dbReference type="GO" id="GO:0005524">
    <property type="term" value="F:ATP binding"/>
    <property type="evidence" value="ECO:0000314"/>
    <property type="project" value="MTBBASE"/>
</dbReference>
<dbReference type="GO" id="GO:0004550">
    <property type="term" value="F:nucleoside diphosphate kinase activity"/>
    <property type="evidence" value="ECO:0000314"/>
    <property type="project" value="MTBBASE"/>
</dbReference>
<dbReference type="GO" id="GO:0044209">
    <property type="term" value="P:AMP salvage"/>
    <property type="evidence" value="ECO:0000314"/>
    <property type="project" value="MTBBASE"/>
</dbReference>
<dbReference type="GO" id="GO:0009132">
    <property type="term" value="P:nucleoside diphosphate metabolic process"/>
    <property type="evidence" value="ECO:0000314"/>
    <property type="project" value="MTBBASE"/>
</dbReference>
<dbReference type="GO" id="GO:0009123">
    <property type="term" value="P:nucleoside monophosphate metabolic process"/>
    <property type="evidence" value="ECO:0000314"/>
    <property type="project" value="MTBBASE"/>
</dbReference>
<dbReference type="GO" id="GO:0009141">
    <property type="term" value="P:nucleoside triphosphate metabolic process"/>
    <property type="evidence" value="ECO:0000314"/>
    <property type="project" value="MTBBASE"/>
</dbReference>
<dbReference type="GO" id="GO:0006144">
    <property type="term" value="P:purine nucleobase metabolic process"/>
    <property type="evidence" value="ECO:0000314"/>
    <property type="project" value="MTBBASE"/>
</dbReference>
<dbReference type="CDD" id="cd01428">
    <property type="entry name" value="ADK"/>
    <property type="match status" value="1"/>
</dbReference>
<dbReference type="FunFam" id="3.40.50.300:FF:002170">
    <property type="entry name" value="Adenylate kinase"/>
    <property type="match status" value="1"/>
</dbReference>
<dbReference type="Gene3D" id="3.40.50.300">
    <property type="entry name" value="P-loop containing nucleotide triphosphate hydrolases"/>
    <property type="match status" value="1"/>
</dbReference>
<dbReference type="HAMAP" id="MF_00235">
    <property type="entry name" value="Adenylate_kinase_Adk"/>
    <property type="match status" value="1"/>
</dbReference>
<dbReference type="InterPro" id="IPR000850">
    <property type="entry name" value="Adenylat/UMP-CMP_kin"/>
</dbReference>
<dbReference type="InterPro" id="IPR033690">
    <property type="entry name" value="Adenylat_kinase_CS"/>
</dbReference>
<dbReference type="InterPro" id="IPR027417">
    <property type="entry name" value="P-loop_NTPase"/>
</dbReference>
<dbReference type="NCBIfam" id="NF001381">
    <property type="entry name" value="PRK00279.1-3"/>
    <property type="match status" value="1"/>
</dbReference>
<dbReference type="NCBIfam" id="NF011100">
    <property type="entry name" value="PRK14527.1"/>
    <property type="match status" value="1"/>
</dbReference>
<dbReference type="NCBIfam" id="NF011104">
    <property type="entry name" value="PRK14531.1"/>
    <property type="match status" value="1"/>
</dbReference>
<dbReference type="NCBIfam" id="NF011105">
    <property type="entry name" value="PRK14532.1"/>
    <property type="match status" value="1"/>
</dbReference>
<dbReference type="PANTHER" id="PTHR23359">
    <property type="entry name" value="NUCLEOTIDE KINASE"/>
    <property type="match status" value="1"/>
</dbReference>
<dbReference type="Pfam" id="PF00406">
    <property type="entry name" value="ADK"/>
    <property type="match status" value="1"/>
</dbReference>
<dbReference type="PRINTS" id="PR00094">
    <property type="entry name" value="ADENYLTKNASE"/>
</dbReference>
<dbReference type="SUPFAM" id="SSF52540">
    <property type="entry name" value="P-loop containing nucleoside triphosphate hydrolases"/>
    <property type="match status" value="1"/>
</dbReference>
<dbReference type="PROSITE" id="PS00113">
    <property type="entry name" value="ADENYLATE_KINASE"/>
    <property type="match status" value="1"/>
</dbReference>
<comment type="function">
    <text evidence="1 2">Catalyzes the reversible transfer of the terminal phosphate group between ATP and AMP. Plays an important role in cellular energy homeostasis and in adenine nucleotide metabolism. Has a broad specificity for nucleoside triphosphates, being highly active with ATP or dATP as phosphate donors, and less active with GTP or UTP.</text>
</comment>
<comment type="catalytic activity">
    <reaction evidence="1 2">
        <text>AMP + ATP = 2 ADP</text>
        <dbReference type="Rhea" id="RHEA:12973"/>
        <dbReference type="ChEBI" id="CHEBI:30616"/>
        <dbReference type="ChEBI" id="CHEBI:456215"/>
        <dbReference type="ChEBI" id="CHEBI:456216"/>
        <dbReference type="EC" id="2.7.4.3"/>
    </reaction>
</comment>
<comment type="activity regulation">
    <text evidence="2">Competitively inhibited by the bisubstrate analog Ap5A, by 7-deazaadenosine 5'-monophosphate (TuMP) and 8-bromo-AMP.</text>
</comment>
<comment type="biophysicochemical properties">
    <kinetics>
        <KM evidence="2">43 uM for ATP (at pH 7.4 and 30 degrees Celsius)</KM>
        <KM evidence="2">208 uM for AMP (at pH 7.4 and 30 degrees Celsius)</KM>
        <KM evidence="2">72 uM for ADP (at pH 7.4 and 30 degrees Celsius)</KM>
        <Vmax evidence="2">235.0 umol/min/mg enzyme for the forward reaction (at pH 7.4 and 30 degrees Celsius)</Vmax>
        <Vmax evidence="2">190.0 umol/min/mg enzyme for the reverse reaction (at pH 7.4 and 30 degrees Celsius)</Vmax>
    </kinetics>
    <temperatureDependence>
        <text evidence="2">Optimum temperature is 50-55 degrees Celsius. Highly thermostable. Is half-inactivated at about 67 degrees Celsius.</text>
    </temperatureDependence>
</comment>
<comment type="pathway">
    <text evidence="1">Purine metabolism; AMP biosynthesis via salvage pathway; AMP from ADP: step 1/1.</text>
</comment>
<comment type="subunit">
    <text evidence="1">Monomer.</text>
</comment>
<comment type="subcellular location">
    <subcellularLocation>
        <location evidence="1">Cytoplasm</location>
    </subcellularLocation>
</comment>
<comment type="domain">
    <text evidence="1 6">Consists of three domains, a large central CORE domain and two small peripheral domains, NMPbind and LID, which undergo movements during catalysis. The LID domain closes over the site of phosphoryl transfer upon ATP binding. Assembling and dissambling the active center during each catalytic cycle provides an effective means to prevent ATP hydrolysis. The LID domain is a solvent-exposed domain that is much shorter in Mycobacterium than in many other bacteria like E.coli.</text>
</comment>
<comment type="mass spectrometry" mass="20123.5" error="1.6" method="Electrospray" evidence="2"/>
<comment type="similarity">
    <text evidence="1">Belongs to the adenylate kinase family.</text>
</comment>
<protein>
    <recommendedName>
        <fullName evidence="1">Adenylate kinase</fullName>
        <shortName evidence="1">AK</shortName>
        <ecNumber evidence="1">2.7.4.3</ecNumber>
    </recommendedName>
    <alternativeName>
        <fullName evidence="1">ATP-AMP transphosphorylase</fullName>
    </alternativeName>
    <alternativeName>
        <fullName evidence="1">ATP:AMP phosphotransferase</fullName>
    </alternativeName>
    <alternativeName>
        <fullName evidence="1">Adenylate monophosphate kinase</fullName>
    </alternativeName>
</protein>
<proteinExistence type="evidence at protein level"/>
<name>KAD_MYCTU</name>
<reference key="1">
    <citation type="journal article" date="1998" name="Nature">
        <title>Deciphering the biology of Mycobacterium tuberculosis from the complete genome sequence.</title>
        <authorList>
            <person name="Cole S.T."/>
            <person name="Brosch R."/>
            <person name="Parkhill J."/>
            <person name="Garnier T."/>
            <person name="Churcher C.M."/>
            <person name="Harris D.E."/>
            <person name="Gordon S.V."/>
            <person name="Eiglmeier K."/>
            <person name="Gas S."/>
            <person name="Barry C.E. III"/>
            <person name="Tekaia F."/>
            <person name="Badcock K."/>
            <person name="Basham D."/>
            <person name="Brown D."/>
            <person name="Chillingworth T."/>
            <person name="Connor R."/>
            <person name="Davies R.M."/>
            <person name="Devlin K."/>
            <person name="Feltwell T."/>
            <person name="Gentles S."/>
            <person name="Hamlin N."/>
            <person name="Holroyd S."/>
            <person name="Hornsby T."/>
            <person name="Jagels K."/>
            <person name="Krogh A."/>
            <person name="McLean J."/>
            <person name="Moule S."/>
            <person name="Murphy L.D."/>
            <person name="Oliver S."/>
            <person name="Osborne J."/>
            <person name="Quail M.A."/>
            <person name="Rajandream M.A."/>
            <person name="Rogers J."/>
            <person name="Rutter S."/>
            <person name="Seeger K."/>
            <person name="Skelton S."/>
            <person name="Squares S."/>
            <person name="Squares R."/>
            <person name="Sulston J.E."/>
            <person name="Taylor K."/>
            <person name="Whitehead S."/>
            <person name="Barrell B.G."/>
        </authorList>
    </citation>
    <scope>NUCLEOTIDE SEQUENCE [LARGE SCALE GENOMIC DNA]</scope>
    <source>
        <strain>ATCC 25618 / H37Rv</strain>
    </source>
</reference>
<reference key="2">
    <citation type="journal article" date="1999" name="Proteins">
        <title>A new subfamily of short bacterial adenylate kinases with the Mycobacterium tuberculosis enzyme as a model: a predictive and experimental study.</title>
        <authorList>
            <person name="Munier-Lehmann H."/>
            <person name="Burlacu-Miron S."/>
            <person name="Craescu C.T."/>
            <person name="Mantsch H.H."/>
            <person name="Schultz C.P."/>
        </authorList>
    </citation>
    <scope>PROTEIN SEQUENCE OF N-TERMINUS</scope>
    <scope>PARTIAL PROTEIN SEQUENCE</scope>
    <scope>FUNCTION</scope>
    <scope>MASS SPECTROMETRY</scope>
    <scope>BIOPHYSICOCHEMICAL PROPERTIES</scope>
    <scope>ACTIVITY REGULATION</scope>
    <scope>CATALYTIC ACTIVITY</scope>
</reference>
<reference key="3">
    <citation type="journal article" date="2010" name="PLoS ONE">
        <title>Prokaryotic ubiquitin-like protein (Pup) proteome of Mycobacterium tuberculosis.</title>
        <authorList>
            <person name="Festa R.A."/>
            <person name="McAllister F."/>
            <person name="Pearce M.J."/>
            <person name="Mintseris J."/>
            <person name="Burns K.E."/>
            <person name="Gygi S.P."/>
            <person name="Darwin K.H."/>
        </authorList>
    </citation>
    <scope>PUPYLATION AT LYS-94</scope>
    <scope>IDENTIFICATION BY MASS SPECTROMETRY</scope>
    <source>
        <strain>ATCC 25618 / H37Rv</strain>
    </source>
</reference>
<reference key="4">
    <citation type="journal article" date="2011" name="Mol. Cell. Proteomics">
        <title>Proteogenomic analysis of Mycobacterium tuberculosis by high resolution mass spectrometry.</title>
        <authorList>
            <person name="Kelkar D.S."/>
            <person name="Kumar D."/>
            <person name="Kumar P."/>
            <person name="Balakrishnan L."/>
            <person name="Muthusamy B."/>
            <person name="Yadav A.K."/>
            <person name="Shrivastava P."/>
            <person name="Marimuthu A."/>
            <person name="Anand S."/>
            <person name="Sundaram H."/>
            <person name="Kingsbury R."/>
            <person name="Harsha H.C."/>
            <person name="Nair B."/>
            <person name="Prasad T.S."/>
            <person name="Chauhan D.S."/>
            <person name="Katoch K."/>
            <person name="Katoch V.M."/>
            <person name="Kumar P."/>
            <person name="Chaerkady R."/>
            <person name="Ramachandran S."/>
            <person name="Dash D."/>
            <person name="Pandey A."/>
        </authorList>
    </citation>
    <scope>IDENTIFICATION BY MASS SPECTROMETRY [LARGE SCALE ANALYSIS]</scope>
    <source>
        <strain>ATCC 25618 / H37Rv</strain>
    </source>
</reference>
<reference key="5">
    <citation type="journal article" date="2004" name="Biochemistry">
        <title>Structural and dynamic studies on ligand-free adenylate kinase from Mycobacterium tuberculosis revealed a closed conformation that can be related to the reduced catalytic activity.</title>
        <authorList>
            <person name="Miron S."/>
            <person name="Munier-Lehmann H."/>
            <person name="Craescu C.T."/>
        </authorList>
    </citation>
    <scope>STRUCTURE BY NMR</scope>
</reference>
<reference key="6">
    <citation type="journal article" date="2006" name="Protein Sci.">
        <title>The crystal structure of Mycobacterium tuberculosis adenylate kinase in complex with two molecules of ADP and Mg2+ supports an associative mechanism for phosphoryl transfer.</title>
        <authorList>
            <person name="Bellinzoni M."/>
            <person name="Haouz A."/>
            <person name="Grana M."/>
            <person name="Munier-Lehmann H."/>
            <person name="Shepard W."/>
            <person name="Alzari P.M."/>
        </authorList>
    </citation>
    <scope>X-RAY CRYSTALLOGRAPHY (1.90 ANGSTROMS) IN COMPLEX WITH ADP</scope>
</reference>
<keyword id="KW-0002">3D-structure</keyword>
<keyword id="KW-0067">ATP-binding</keyword>
<keyword id="KW-0963">Cytoplasm</keyword>
<keyword id="KW-0903">Direct protein sequencing</keyword>
<keyword id="KW-1017">Isopeptide bond</keyword>
<keyword id="KW-0418">Kinase</keyword>
<keyword id="KW-0545">Nucleotide biosynthesis</keyword>
<keyword id="KW-0547">Nucleotide-binding</keyword>
<keyword id="KW-1185">Reference proteome</keyword>
<keyword id="KW-0808">Transferase</keyword>
<keyword id="KW-0832">Ubl conjugation</keyword>
<organism>
    <name type="scientific">Mycobacterium tuberculosis (strain ATCC 25618 / H37Rv)</name>
    <dbReference type="NCBI Taxonomy" id="83332"/>
    <lineage>
        <taxon>Bacteria</taxon>
        <taxon>Bacillati</taxon>
        <taxon>Actinomycetota</taxon>
        <taxon>Actinomycetes</taxon>
        <taxon>Mycobacteriales</taxon>
        <taxon>Mycobacteriaceae</taxon>
        <taxon>Mycobacterium</taxon>
        <taxon>Mycobacterium tuberculosis complex</taxon>
    </lineage>
</organism>
<sequence length="181" mass="20125">MRVLLLGPPGAGKGTQAVKLAEKLGIPQISTGELFRRNIEEGTKLGVEAKRYLDAGDLVPSDLTNELVDDRLNNPDAANGFILDGYPRSVEQAKALHEMLERRGTDIDAVLEFRVSEEVLLERLKGRGRADDTDDVILNRMKVYRDETAPLLEYYRDQLKTVDAVGTMDEVFARALRALGK</sequence>
<feature type="chain" id="PRO_0000158806" description="Adenylate kinase">
    <location>
        <begin position="1"/>
        <end position="181"/>
    </location>
</feature>
<feature type="region of interest" description="NMP" evidence="1 3">
    <location>
        <begin position="30"/>
        <end position="59"/>
    </location>
</feature>
<feature type="region of interest" description="LID" evidence="1 3">
    <location>
        <begin position="126"/>
        <end position="132"/>
    </location>
</feature>
<feature type="binding site" evidence="1 4">
    <location>
        <begin position="10"/>
        <end position="15"/>
    </location>
    <ligand>
        <name>ATP</name>
        <dbReference type="ChEBI" id="CHEBI:30616"/>
    </ligand>
</feature>
<feature type="binding site" evidence="1 4">
    <location>
        <position position="31"/>
    </location>
    <ligand>
        <name>AMP</name>
        <dbReference type="ChEBI" id="CHEBI:456215"/>
    </ligand>
</feature>
<feature type="binding site" evidence="1 4">
    <location>
        <position position="36"/>
    </location>
    <ligand>
        <name>AMP</name>
        <dbReference type="ChEBI" id="CHEBI:456215"/>
    </ligand>
</feature>
<feature type="binding site" evidence="1 4">
    <location>
        <begin position="57"/>
        <end position="59"/>
    </location>
    <ligand>
        <name>AMP</name>
        <dbReference type="ChEBI" id="CHEBI:456215"/>
    </ligand>
</feature>
<feature type="binding site" evidence="1 4">
    <location>
        <begin position="85"/>
        <end position="88"/>
    </location>
    <ligand>
        <name>AMP</name>
        <dbReference type="ChEBI" id="CHEBI:456215"/>
    </ligand>
</feature>
<feature type="binding site" evidence="1 4">
    <location>
        <position position="92"/>
    </location>
    <ligand>
        <name>AMP</name>
        <dbReference type="ChEBI" id="CHEBI:456215"/>
    </ligand>
</feature>
<feature type="binding site" evidence="1 4">
    <location>
        <position position="127"/>
    </location>
    <ligand>
        <name>ATP</name>
        <dbReference type="ChEBI" id="CHEBI:30616"/>
    </ligand>
</feature>
<feature type="binding site" evidence="1 4">
    <location>
        <position position="129"/>
    </location>
    <ligand>
        <name>AMP</name>
        <dbReference type="ChEBI" id="CHEBI:456215"/>
    </ligand>
</feature>
<feature type="binding site" evidence="1 4">
    <location>
        <position position="140"/>
    </location>
    <ligand>
        <name>AMP</name>
        <dbReference type="ChEBI" id="CHEBI:456215"/>
    </ligand>
</feature>
<feature type="binding site" evidence="1 4">
    <location>
        <position position="166"/>
    </location>
    <ligand>
        <name>ATP</name>
        <dbReference type="ChEBI" id="CHEBI:30616"/>
    </ligand>
</feature>
<feature type="cross-link" description="Isoglutamyl lysine isopeptide (Lys-Gln) (interchain with Q-Cter in protein Pup)" evidence="5">
    <location>
        <position position="94"/>
    </location>
</feature>
<feature type="strand" evidence="8">
    <location>
        <begin position="2"/>
        <end position="6"/>
    </location>
</feature>
<feature type="strand" evidence="7">
    <location>
        <begin position="8"/>
        <end position="11"/>
    </location>
</feature>
<feature type="helix" evidence="8">
    <location>
        <begin position="13"/>
        <end position="24"/>
    </location>
</feature>
<feature type="strand" evidence="8">
    <location>
        <begin position="28"/>
        <end position="30"/>
    </location>
</feature>
<feature type="helix" evidence="8">
    <location>
        <begin position="31"/>
        <end position="40"/>
    </location>
</feature>
<feature type="helix" evidence="8">
    <location>
        <begin position="44"/>
        <end position="55"/>
    </location>
</feature>
<feature type="helix" evidence="8">
    <location>
        <begin position="61"/>
        <end position="71"/>
    </location>
</feature>
<feature type="helix" evidence="8">
    <location>
        <begin position="75"/>
        <end position="77"/>
    </location>
</feature>
<feature type="strand" evidence="8">
    <location>
        <begin position="81"/>
        <end position="85"/>
    </location>
</feature>
<feature type="helix" evidence="8">
    <location>
        <begin position="90"/>
        <end position="102"/>
    </location>
</feature>
<feature type="strand" evidence="8">
    <location>
        <begin position="109"/>
        <end position="114"/>
    </location>
</feature>
<feature type="helix" evidence="8">
    <location>
        <begin position="117"/>
        <end position="127"/>
    </location>
</feature>
<feature type="strand" evidence="7">
    <location>
        <begin position="130"/>
        <end position="132"/>
    </location>
</feature>
<feature type="helix" evidence="8">
    <location>
        <begin position="134"/>
        <end position="147"/>
    </location>
</feature>
<feature type="turn" evidence="8">
    <location>
        <begin position="148"/>
        <end position="150"/>
    </location>
</feature>
<feature type="helix" evidence="8">
    <location>
        <begin position="151"/>
        <end position="154"/>
    </location>
</feature>
<feature type="turn" evidence="8">
    <location>
        <begin position="155"/>
        <end position="158"/>
    </location>
</feature>
<feature type="strand" evidence="8">
    <location>
        <begin position="159"/>
        <end position="163"/>
    </location>
</feature>
<feature type="helix" evidence="8">
    <location>
        <begin position="168"/>
        <end position="178"/>
    </location>
</feature>
<gene>
    <name evidence="1" type="primary">adk</name>
    <name type="ordered locus">Rv0733</name>
    <name type="ORF">MTV041.07</name>
</gene>